<organism>
    <name type="scientific">Homo sapiens</name>
    <name type="common">Human</name>
    <dbReference type="NCBI Taxonomy" id="9606"/>
    <lineage>
        <taxon>Eukaryota</taxon>
        <taxon>Metazoa</taxon>
        <taxon>Chordata</taxon>
        <taxon>Craniata</taxon>
        <taxon>Vertebrata</taxon>
        <taxon>Euteleostomi</taxon>
        <taxon>Mammalia</taxon>
        <taxon>Eutheria</taxon>
        <taxon>Euarchontoglires</taxon>
        <taxon>Primates</taxon>
        <taxon>Haplorrhini</taxon>
        <taxon>Catarrhini</taxon>
        <taxon>Hominidae</taxon>
        <taxon>Homo</taxon>
    </lineage>
</organism>
<reference key="1">
    <citation type="journal article" date="1991" name="Proc. Natl. Acad. Sci. U.S.A.">
        <title>Human brain prostaglandin D synthase has been evolutionarily differentiated from lipophilic-ligand carrier proteins.</title>
        <authorList>
            <person name="Nagata A."/>
            <person name="Suzuki Y."/>
            <person name="Igarashi M."/>
            <person name="Eguchi N."/>
            <person name="Toh H."/>
            <person name="Urade Y."/>
            <person name="Hayaishi O."/>
        </authorList>
    </citation>
    <scope>NUCLEOTIDE SEQUENCE [MRNA]</scope>
    <source>
        <tissue>Brain</tissue>
    </source>
</reference>
<reference key="2">
    <citation type="submission" date="2006-08" db="EMBL/GenBank/DDBJ databases">
        <authorList>
            <person name="Nagata A."/>
            <person name="Suzuki Y."/>
            <person name="Igarashi M."/>
            <person name="Eguchi N."/>
            <person name="Toh H."/>
            <person name="Urade Y."/>
            <person name="Hayaishi O."/>
        </authorList>
    </citation>
    <scope>SEQUENCE REVISION TO 12; 16; 19; 36; 56; 73; 77; 99; 100; 127 AND 176</scope>
</reference>
<reference key="3">
    <citation type="journal article" date="1992" name="J. Biol. Chem.">
        <title>Structure and chromosomal localization of the human gene for a brain form of prostaglandin D2 synthase.</title>
        <authorList>
            <person name="White D.M."/>
            <person name="Mikol D.D."/>
            <person name="Espinosa R."/>
            <person name="Weimer B."/>
            <person name="le Beau M.M."/>
            <person name="Stefansson K."/>
        </authorList>
    </citation>
    <scope>NUCLEOTIDE SEQUENCE [GENOMIC DNA]</scope>
    <source>
        <tissue>Brain</tissue>
    </source>
</reference>
<reference key="4">
    <citation type="book" date="2001" name="Andrology in the 21st century">
        <title>cDNA cloning and sequence analysis of prostaglandin D synthase in human testis.</title>
        <editorList>
            <person name="Robaire B."/>
            <person name="Chemes H."/>
            <person name="Morales C.R."/>
        </editorList>
        <authorList>
            <person name="Lu J.C."/>
            <person name="Li X.Y."/>
            <person name="Huang Y.F."/>
            <person name="Zhang X.R."/>
        </authorList>
    </citation>
    <scope>NUCLEOTIDE SEQUENCE [MRNA]</scope>
    <source>
        <tissue>Testis</tissue>
    </source>
</reference>
<reference key="5">
    <citation type="submission" date="2005-11" db="EMBL/GenBank/DDBJ databases">
        <authorList>
            <consortium name="SeattleSNPs variation discovery resource"/>
        </authorList>
    </citation>
    <scope>NUCLEOTIDE SEQUENCE [GENOMIC DNA]</scope>
</reference>
<reference key="6">
    <citation type="journal article" date="2004" name="Nat. Genet.">
        <title>Complete sequencing and characterization of 21,243 full-length human cDNAs.</title>
        <authorList>
            <person name="Ota T."/>
            <person name="Suzuki Y."/>
            <person name="Nishikawa T."/>
            <person name="Otsuki T."/>
            <person name="Sugiyama T."/>
            <person name="Irie R."/>
            <person name="Wakamatsu A."/>
            <person name="Hayashi K."/>
            <person name="Sato H."/>
            <person name="Nagai K."/>
            <person name="Kimura K."/>
            <person name="Makita H."/>
            <person name="Sekine M."/>
            <person name="Obayashi M."/>
            <person name="Nishi T."/>
            <person name="Shibahara T."/>
            <person name="Tanaka T."/>
            <person name="Ishii S."/>
            <person name="Yamamoto J."/>
            <person name="Saito K."/>
            <person name="Kawai Y."/>
            <person name="Isono Y."/>
            <person name="Nakamura Y."/>
            <person name="Nagahari K."/>
            <person name="Murakami K."/>
            <person name="Yasuda T."/>
            <person name="Iwayanagi T."/>
            <person name="Wagatsuma M."/>
            <person name="Shiratori A."/>
            <person name="Sudo H."/>
            <person name="Hosoiri T."/>
            <person name="Kaku Y."/>
            <person name="Kodaira H."/>
            <person name="Kondo H."/>
            <person name="Sugawara M."/>
            <person name="Takahashi M."/>
            <person name="Kanda K."/>
            <person name="Yokoi T."/>
            <person name="Furuya T."/>
            <person name="Kikkawa E."/>
            <person name="Omura Y."/>
            <person name="Abe K."/>
            <person name="Kamihara K."/>
            <person name="Katsuta N."/>
            <person name="Sato K."/>
            <person name="Tanikawa M."/>
            <person name="Yamazaki M."/>
            <person name="Ninomiya K."/>
            <person name="Ishibashi T."/>
            <person name="Yamashita H."/>
            <person name="Murakawa K."/>
            <person name="Fujimori K."/>
            <person name="Tanai H."/>
            <person name="Kimata M."/>
            <person name="Watanabe M."/>
            <person name="Hiraoka S."/>
            <person name="Chiba Y."/>
            <person name="Ishida S."/>
            <person name="Ono Y."/>
            <person name="Takiguchi S."/>
            <person name="Watanabe S."/>
            <person name="Yosida M."/>
            <person name="Hotuta T."/>
            <person name="Kusano J."/>
            <person name="Kanehori K."/>
            <person name="Takahashi-Fujii A."/>
            <person name="Hara H."/>
            <person name="Tanase T.-O."/>
            <person name="Nomura Y."/>
            <person name="Togiya S."/>
            <person name="Komai F."/>
            <person name="Hara R."/>
            <person name="Takeuchi K."/>
            <person name="Arita M."/>
            <person name="Imose N."/>
            <person name="Musashino K."/>
            <person name="Yuuki H."/>
            <person name="Oshima A."/>
            <person name="Sasaki N."/>
            <person name="Aotsuka S."/>
            <person name="Yoshikawa Y."/>
            <person name="Matsunawa H."/>
            <person name="Ichihara T."/>
            <person name="Shiohata N."/>
            <person name="Sano S."/>
            <person name="Moriya S."/>
            <person name="Momiyama H."/>
            <person name="Satoh N."/>
            <person name="Takami S."/>
            <person name="Terashima Y."/>
            <person name="Suzuki O."/>
            <person name="Nakagawa S."/>
            <person name="Senoh A."/>
            <person name="Mizoguchi H."/>
            <person name="Goto Y."/>
            <person name="Shimizu F."/>
            <person name="Wakebe H."/>
            <person name="Hishigaki H."/>
            <person name="Watanabe T."/>
            <person name="Sugiyama A."/>
            <person name="Takemoto M."/>
            <person name="Kawakami B."/>
            <person name="Yamazaki M."/>
            <person name="Watanabe K."/>
            <person name="Kumagai A."/>
            <person name="Itakura S."/>
            <person name="Fukuzumi Y."/>
            <person name="Fujimori Y."/>
            <person name="Komiyama M."/>
            <person name="Tashiro H."/>
            <person name="Tanigami A."/>
            <person name="Fujiwara T."/>
            <person name="Ono T."/>
            <person name="Yamada K."/>
            <person name="Fujii Y."/>
            <person name="Ozaki K."/>
            <person name="Hirao M."/>
            <person name="Ohmori Y."/>
            <person name="Kawabata A."/>
            <person name="Hikiji T."/>
            <person name="Kobatake N."/>
            <person name="Inagaki H."/>
            <person name="Ikema Y."/>
            <person name="Okamoto S."/>
            <person name="Okitani R."/>
            <person name="Kawakami T."/>
            <person name="Noguchi S."/>
            <person name="Itoh T."/>
            <person name="Shigeta K."/>
            <person name="Senba T."/>
            <person name="Matsumura K."/>
            <person name="Nakajima Y."/>
            <person name="Mizuno T."/>
            <person name="Morinaga M."/>
            <person name="Sasaki M."/>
            <person name="Togashi T."/>
            <person name="Oyama M."/>
            <person name="Hata H."/>
            <person name="Watanabe M."/>
            <person name="Komatsu T."/>
            <person name="Mizushima-Sugano J."/>
            <person name="Satoh T."/>
            <person name="Shirai Y."/>
            <person name="Takahashi Y."/>
            <person name="Nakagawa K."/>
            <person name="Okumura K."/>
            <person name="Nagase T."/>
            <person name="Nomura N."/>
            <person name="Kikuchi H."/>
            <person name="Masuho Y."/>
            <person name="Yamashita R."/>
            <person name="Nakai K."/>
            <person name="Yada T."/>
            <person name="Nakamura Y."/>
            <person name="Ohara O."/>
            <person name="Isogai T."/>
            <person name="Sugano S."/>
        </authorList>
    </citation>
    <scope>NUCLEOTIDE SEQUENCE [LARGE SCALE MRNA]</scope>
    <source>
        <tissue>Testis</tissue>
    </source>
</reference>
<reference key="7">
    <citation type="journal article" date="2005" name="DNA Res.">
        <title>Signal sequence and keyword trap in silico for selection of full-length human cDNAs encoding secretion or membrane proteins from oligo-capped cDNA libraries.</title>
        <authorList>
            <person name="Otsuki T."/>
            <person name="Ota T."/>
            <person name="Nishikawa T."/>
            <person name="Hayashi K."/>
            <person name="Suzuki Y."/>
            <person name="Yamamoto J."/>
            <person name="Wakamatsu A."/>
            <person name="Kimura K."/>
            <person name="Sakamoto K."/>
            <person name="Hatano N."/>
            <person name="Kawai Y."/>
            <person name="Ishii S."/>
            <person name="Saito K."/>
            <person name="Kojima S."/>
            <person name="Sugiyama T."/>
            <person name="Ono T."/>
            <person name="Okano K."/>
            <person name="Yoshikawa Y."/>
            <person name="Aotsuka S."/>
            <person name="Sasaki N."/>
            <person name="Hattori A."/>
            <person name="Okumura K."/>
            <person name="Nagai K."/>
            <person name="Sugano S."/>
            <person name="Isogai T."/>
        </authorList>
    </citation>
    <scope>NUCLEOTIDE SEQUENCE [LARGE SCALE MRNA]</scope>
</reference>
<reference key="8">
    <citation type="submission" date="2003-05" db="EMBL/GenBank/DDBJ databases">
        <title>Cloning of human full-length CDSs in BD Creator(TM) system donor vector.</title>
        <authorList>
            <person name="Kalnine N."/>
            <person name="Chen X."/>
            <person name="Rolfs A."/>
            <person name="Halleck A."/>
            <person name="Hines L."/>
            <person name="Eisenstein S."/>
            <person name="Koundinya M."/>
            <person name="Raphael J."/>
            <person name="Moreira D."/>
            <person name="Kelley T."/>
            <person name="LaBaer J."/>
            <person name="Lin Y."/>
            <person name="Phelan M."/>
            <person name="Farmer A."/>
        </authorList>
    </citation>
    <scope>NUCLEOTIDE SEQUENCE [LARGE SCALE MRNA]</scope>
</reference>
<reference key="9">
    <citation type="journal article" date="2004" name="Nature">
        <title>DNA sequence and analysis of human chromosome 9.</title>
        <authorList>
            <person name="Humphray S.J."/>
            <person name="Oliver K."/>
            <person name="Hunt A.R."/>
            <person name="Plumb R.W."/>
            <person name="Loveland J.E."/>
            <person name="Howe K.L."/>
            <person name="Andrews T.D."/>
            <person name="Searle S."/>
            <person name="Hunt S.E."/>
            <person name="Scott C.E."/>
            <person name="Jones M.C."/>
            <person name="Ainscough R."/>
            <person name="Almeida J.P."/>
            <person name="Ambrose K.D."/>
            <person name="Ashwell R.I.S."/>
            <person name="Babbage A.K."/>
            <person name="Babbage S."/>
            <person name="Bagguley C.L."/>
            <person name="Bailey J."/>
            <person name="Banerjee R."/>
            <person name="Barker D.J."/>
            <person name="Barlow K.F."/>
            <person name="Bates K."/>
            <person name="Beasley H."/>
            <person name="Beasley O."/>
            <person name="Bird C.P."/>
            <person name="Bray-Allen S."/>
            <person name="Brown A.J."/>
            <person name="Brown J.Y."/>
            <person name="Burford D."/>
            <person name="Burrill W."/>
            <person name="Burton J."/>
            <person name="Carder C."/>
            <person name="Carter N.P."/>
            <person name="Chapman J.C."/>
            <person name="Chen Y."/>
            <person name="Clarke G."/>
            <person name="Clark S.Y."/>
            <person name="Clee C.M."/>
            <person name="Clegg S."/>
            <person name="Collier R.E."/>
            <person name="Corby N."/>
            <person name="Crosier M."/>
            <person name="Cummings A.T."/>
            <person name="Davies J."/>
            <person name="Dhami P."/>
            <person name="Dunn M."/>
            <person name="Dutta I."/>
            <person name="Dyer L.W."/>
            <person name="Earthrowl M.E."/>
            <person name="Faulkner L."/>
            <person name="Fleming C.J."/>
            <person name="Frankish A."/>
            <person name="Frankland J.A."/>
            <person name="French L."/>
            <person name="Fricker D.G."/>
            <person name="Garner P."/>
            <person name="Garnett J."/>
            <person name="Ghori J."/>
            <person name="Gilbert J.G.R."/>
            <person name="Glison C."/>
            <person name="Grafham D.V."/>
            <person name="Gribble S."/>
            <person name="Griffiths C."/>
            <person name="Griffiths-Jones S."/>
            <person name="Grocock R."/>
            <person name="Guy J."/>
            <person name="Hall R.E."/>
            <person name="Hammond S."/>
            <person name="Harley J.L."/>
            <person name="Harrison E.S.I."/>
            <person name="Hart E.A."/>
            <person name="Heath P.D."/>
            <person name="Henderson C.D."/>
            <person name="Hopkins B.L."/>
            <person name="Howard P.J."/>
            <person name="Howden P.J."/>
            <person name="Huckle E."/>
            <person name="Johnson C."/>
            <person name="Johnson D."/>
            <person name="Joy A.A."/>
            <person name="Kay M."/>
            <person name="Keenan S."/>
            <person name="Kershaw J.K."/>
            <person name="Kimberley A.M."/>
            <person name="King A."/>
            <person name="Knights A."/>
            <person name="Laird G.K."/>
            <person name="Langford C."/>
            <person name="Lawlor S."/>
            <person name="Leongamornlert D.A."/>
            <person name="Leversha M."/>
            <person name="Lloyd C."/>
            <person name="Lloyd D.M."/>
            <person name="Lovell J."/>
            <person name="Martin S."/>
            <person name="Mashreghi-Mohammadi M."/>
            <person name="Matthews L."/>
            <person name="McLaren S."/>
            <person name="McLay K.E."/>
            <person name="McMurray A."/>
            <person name="Milne S."/>
            <person name="Nickerson T."/>
            <person name="Nisbett J."/>
            <person name="Nordsiek G."/>
            <person name="Pearce A.V."/>
            <person name="Peck A.I."/>
            <person name="Porter K.M."/>
            <person name="Pandian R."/>
            <person name="Pelan S."/>
            <person name="Phillimore B."/>
            <person name="Povey S."/>
            <person name="Ramsey Y."/>
            <person name="Rand V."/>
            <person name="Scharfe M."/>
            <person name="Sehra H.K."/>
            <person name="Shownkeen R."/>
            <person name="Sims S.K."/>
            <person name="Skuce C.D."/>
            <person name="Smith M."/>
            <person name="Steward C.A."/>
            <person name="Swarbreck D."/>
            <person name="Sycamore N."/>
            <person name="Tester J."/>
            <person name="Thorpe A."/>
            <person name="Tracey A."/>
            <person name="Tromans A."/>
            <person name="Thomas D.W."/>
            <person name="Wall M."/>
            <person name="Wallis J.M."/>
            <person name="West A.P."/>
            <person name="Whitehead S.L."/>
            <person name="Willey D.L."/>
            <person name="Williams S.A."/>
            <person name="Wilming L."/>
            <person name="Wray P.W."/>
            <person name="Young L."/>
            <person name="Ashurst J.L."/>
            <person name="Coulson A."/>
            <person name="Blocker H."/>
            <person name="Durbin R.M."/>
            <person name="Sulston J.E."/>
            <person name="Hubbard T."/>
            <person name="Jackson M.J."/>
            <person name="Bentley D.R."/>
            <person name="Beck S."/>
            <person name="Rogers J."/>
            <person name="Dunham I."/>
        </authorList>
    </citation>
    <scope>NUCLEOTIDE SEQUENCE [LARGE SCALE GENOMIC DNA]</scope>
</reference>
<reference key="10">
    <citation type="submission" date="2005-07" db="EMBL/GenBank/DDBJ databases">
        <authorList>
            <person name="Mural R.J."/>
            <person name="Istrail S."/>
            <person name="Sutton G.G."/>
            <person name="Florea L."/>
            <person name="Halpern A.L."/>
            <person name="Mobarry C.M."/>
            <person name="Lippert R."/>
            <person name="Walenz B."/>
            <person name="Shatkay H."/>
            <person name="Dew I."/>
            <person name="Miller J.R."/>
            <person name="Flanigan M.J."/>
            <person name="Edwards N.J."/>
            <person name="Bolanos R."/>
            <person name="Fasulo D."/>
            <person name="Halldorsson B.V."/>
            <person name="Hannenhalli S."/>
            <person name="Turner R."/>
            <person name="Yooseph S."/>
            <person name="Lu F."/>
            <person name="Nusskern D.R."/>
            <person name="Shue B.C."/>
            <person name="Zheng X.H."/>
            <person name="Zhong F."/>
            <person name="Delcher A.L."/>
            <person name="Huson D.H."/>
            <person name="Kravitz S.A."/>
            <person name="Mouchard L."/>
            <person name="Reinert K."/>
            <person name="Remington K.A."/>
            <person name="Clark A.G."/>
            <person name="Waterman M.S."/>
            <person name="Eichler E.E."/>
            <person name="Adams M.D."/>
            <person name="Hunkapiller M.W."/>
            <person name="Myers E.W."/>
            <person name="Venter J.C."/>
        </authorList>
    </citation>
    <scope>NUCLEOTIDE SEQUENCE [LARGE SCALE GENOMIC DNA]</scope>
</reference>
<reference key="11">
    <citation type="journal article" date="2004" name="Genome Res.">
        <title>The status, quality, and expansion of the NIH full-length cDNA project: the Mammalian Gene Collection (MGC).</title>
        <authorList>
            <consortium name="The MGC Project Team"/>
        </authorList>
    </citation>
    <scope>NUCLEOTIDE SEQUENCE [LARGE SCALE MRNA]</scope>
    <source>
        <tissue>Prostate</tissue>
    </source>
</reference>
<reference key="12">
    <citation type="journal article" date="1993" name="J. Neurochem.">
        <title>Purification and chemical characterization of beta-trace protein from human cerebrospinal fluid: its identification as prostaglandin D synthase.</title>
        <authorList>
            <person name="Hoffmann A."/>
            <person name="Conradt H.S."/>
            <person name="Gross G."/>
            <person name="Nimtz M."/>
            <person name="Lottspeich F."/>
            <person name="Wurster U."/>
        </authorList>
    </citation>
    <scope>PROTEIN SEQUENCE OF 23-190</scope>
    <scope>GLYCOSYLATION AT ASN-51 AND ASN-78</scope>
    <source>
        <tissue>Cerebrospinal fluid</tissue>
    </source>
</reference>
<reference key="13">
    <citation type="journal article" date="1993" name="Appl. Theor. Electrophor.">
        <title>Identification of a brain-specific human cerebrospinal fluid glycoprotein, beta-trace protein.</title>
        <authorList>
            <person name="Harrington M.G."/>
            <person name="Aebersold R."/>
            <person name="Martin B.M."/>
            <person name="Merril C.R."/>
            <person name="Hood L."/>
        </authorList>
    </citation>
    <scope>PROTEIN SEQUENCE OF 23-37; 67-77; 117-126 AND 169-178</scope>
    <scope>TISSUE SPECIFICITY</scope>
    <scope>GLYCOSYLATION</scope>
    <source>
        <tissue>Cerebrospinal fluid</tissue>
    </source>
</reference>
<reference key="14">
    <citation type="journal article" date="1993" name="Neurosci. Lett.">
        <title>Purification and N-terminal sequence of beta-trace, a protein abundant in human cerebrospinal fluid.</title>
        <authorList>
            <person name="Zahn M."/>
            <person name="Maeder M."/>
            <person name="Schmidt B."/>
            <person name="Bollensen E."/>
            <person name="Felgenhauer K."/>
        </authorList>
    </citation>
    <scope>PROTEIN SEQUENCE OF 23-50</scope>
    <source>
        <tissue>Cerebrospinal fluid</tissue>
    </source>
</reference>
<reference key="15">
    <citation type="journal article" date="1991" name="Brain Res.">
        <title>Isolation and amino terminal sequence of beta-trace, a novel protein from human cerebrospinal fluid.</title>
        <authorList>
            <person name="Kuruvilla A.P."/>
            <person name="Hochwald G.M."/>
            <person name="Ghiso J."/>
            <person name="Castano E.M."/>
            <person name="Pizzolato M."/>
            <person name="Frangione B."/>
        </authorList>
    </citation>
    <scope>PROTEIN SEQUENCE OF 23-41</scope>
    <source>
        <tissue>Cerebrospinal fluid</tissue>
    </source>
</reference>
<reference key="16">
    <citation type="journal article" date="1998" name="Biol. Reprod.">
        <title>Lipocalin-type prostaglandin D synthase in human male reproductive organs and seminal plasma.</title>
        <authorList>
            <person name="Tokugawa Y."/>
            <person name="Kunishige I."/>
            <person name="Kubota Y."/>
            <person name="Shimoya K."/>
            <person name="Nobunaga T."/>
            <person name="Kimura T."/>
            <person name="Saji F."/>
            <person name="Murata Y."/>
            <person name="Eguchi N."/>
            <person name="Oda H."/>
            <person name="Urade Y."/>
            <person name="Hayaishi O."/>
        </authorList>
    </citation>
    <scope>PROTEIN SEQUENCE OF 23-38</scope>
    <scope>FUNCTION</scope>
    <scope>TISSUE SPECIFICITY</scope>
    <source>
        <tissue>Seminal plasma</tissue>
    </source>
</reference>
<reference key="17">
    <citation type="journal article" date="1998" name="Biochem. Mol. Biol. Int.">
        <title>Quantification of prostaglandin D synthetase in cerebrospinal fluid: a potential marker for brain tumor.</title>
        <authorList>
            <person name="Saso L."/>
            <person name="Leone M.G."/>
            <person name="Sorrentino C."/>
            <person name="Giacomelli S."/>
            <person name="Silvestrini B."/>
            <person name="Grima J."/>
            <person name="Li J.C.H."/>
            <person name="Samy E."/>
            <person name="Mruk D."/>
            <person name="Cheng C.Y."/>
        </authorList>
    </citation>
    <scope>PROTEIN SEQUENCE OF 23-35</scope>
    <scope>TISSUE SPECIFICITY</scope>
    <scope>USE AS A MARKER FOR BRAIN TUMOR</scope>
</reference>
<reference key="18">
    <citation type="journal article" date="1993" name="J. Neurochem.">
        <title>Micropurification of two human cerebrospinal fluid proteins by high performance electrophoresis chromatography.</title>
        <authorList>
            <person name="Leone M.G."/>
            <person name="Saso L."/>
            <person name="Del Vecchio A."/>
            <person name="Mo M."/>
            <person name="Silvestrini B."/>
            <person name="Cheng C.Y."/>
        </authorList>
    </citation>
    <scope>PROTEIN SEQUENCE OF 23-34</scope>
    <source>
        <tissue>Cerebrospinal fluid</tissue>
    </source>
</reference>
<reference key="19">
    <citation type="journal article" date="1996" name="Clin. Chem.">
        <title>Prostaglandin D2 synthase: a component of human amniotic fluid and its association with fetal abnormalities.</title>
        <authorList>
            <person name="Melegos D.N."/>
            <person name="Yu H."/>
            <person name="Diamandis E.P."/>
        </authorList>
    </citation>
    <scope>PROTEIN SEQUENCE OF 30-44</scope>
    <scope>DEVELOPMENTAL STAGE</scope>
    <scope>EXPRESSION IN ABNORMAL PREGNANCIES</scope>
    <source>
        <tissue>Amniotic fluid</tissue>
    </source>
</reference>
<reference key="20">
    <citation type="journal article" date="1996" name="Biochim. Biophys. Acta">
        <title>Astrocytes synthesize and secrete prostaglandin D synthetase in vitro.</title>
        <authorList>
            <person name="Giacomelli S."/>
            <person name="Leone M.-G."/>
            <person name="Grima J."/>
            <person name="Silvestrini B."/>
            <person name="Cheng C.Y."/>
        </authorList>
    </citation>
    <scope>PROTEIN SEQUENCE OF 58-73 AND 123-140</scope>
    <scope>TISSUE SPECIFICITY</scope>
    <source>
        <tissue>Cerebrospinal fluid</tissue>
    </source>
</reference>
<reference key="21">
    <citation type="journal article" date="1997" name="J. Neurosci.">
        <title>Prostaglandin D synthase (beta-trace) in human arachnoid and meningioma cells: roles as a cell marker or in cerebrospinal fluid absorption, tumorigenesis, and calcification process.</title>
        <authorList>
            <person name="Yamashima T."/>
            <person name="Sakuda K."/>
            <person name="Tohma Y."/>
            <person name="Yamashita J."/>
            <person name="Oda H."/>
            <person name="Irikura D."/>
            <person name="Eguchi N."/>
            <person name="Beuckmann C.T."/>
            <person name="Kanaoka Y."/>
            <person name="Urade Y."/>
            <person name="Hayaishi O."/>
        </authorList>
    </citation>
    <scope>SUBCELLULAR LOCATION</scope>
    <scope>TISSUE SPECIFICITY</scope>
    <scope>USE AS A MARKER FOR MENINGIOMA</scope>
</reference>
<reference key="22">
    <citation type="journal article" date="1996" name="Neurosci. Lett.">
        <title>Choroid plexus: the major site of mRNA expression for the beta-trace protein (prostaglandin D synthase) in human brain.</title>
        <authorList>
            <person name="Bloedorn B."/>
            <person name="Maeder M."/>
            <person name="Urade Y."/>
            <person name="Hayaishi O."/>
            <person name="Felgenhauer K."/>
            <person name="Brueck W."/>
        </authorList>
    </citation>
    <scope>TISSUE SPECIFICITY</scope>
</reference>
<reference key="23">
    <citation type="journal article" date="1997" name="Proc. Natl. Acad. Sci. U.S.A.">
        <title>Expression of lipocalin-type prostaglandin D synthase (beta-trace) in human heart and its accumulation in the coronary circulation of angina patients.</title>
        <authorList>
            <person name="Eguchi Y."/>
            <person name="Eguchi N."/>
            <person name="Oda H."/>
            <person name="Seiki K."/>
            <person name="Kijima Y."/>
            <person name="Matsu-ura Y."/>
            <person name="Urade Y."/>
            <person name="Hayaishi O."/>
        </authorList>
    </citation>
    <scope>TISSUE SPECIFICITY</scope>
</reference>
<reference key="24">
    <citation type="journal article" date="1999" name="J. Neurosci. Res.">
        <title>Expression of the beta-trace protein in human pachymeninx as revealed by in situ hybridization and immunocytochemistry.</title>
        <authorList>
            <person name="Bloedorn B."/>
            <person name="Brueck W."/>
            <person name="Tumani H."/>
            <person name="Michel U."/>
            <person name="Rieckmann P."/>
            <person name="Althans N."/>
            <person name="Maeder M."/>
        </authorList>
    </citation>
    <scope>TISSUE SPECIFICITY</scope>
</reference>
<reference key="25">
    <citation type="journal article" date="2002" name="Hypertension">
        <title>Lipocalin-type prostaglandin D synthase in essential hypertension.</title>
        <authorList>
            <person name="Hirawa N."/>
            <person name="Uehara Y."/>
            <person name="Yamakado M."/>
            <person name="Toya Y."/>
            <person name="Gomi T."/>
            <person name="Ikeda T."/>
            <person name="Eguchi Y."/>
            <person name="Takagi M."/>
            <person name="Oda H."/>
            <person name="Seiki K."/>
            <person name="Urade Y."/>
            <person name="Umemura S."/>
        </authorList>
    </citation>
    <scope>TISSUE SPECIFICITY</scope>
    <scope>USE AS A MARKER FOR RENAL INJURY IN HYPERTENSION</scope>
</reference>
<reference key="26">
    <citation type="journal article" date="1997" name="J. Biol. Chem.">
        <title>Beta-trace gene expression is regulated by a core promoter and a distal thyroid hormone response element.</title>
        <authorList>
            <person name="White D.M."/>
            <person name="Takeda T."/>
            <person name="DeGroot L.J."/>
            <person name="Stefansson K."/>
            <person name="Arnason B.G.W."/>
        </authorList>
    </citation>
    <scope>INDUCTION BY THYROID HORMONE</scope>
</reference>
<reference key="27">
    <citation type="journal article" date="2001" name="Electrophoresis">
        <title>Charge microheterogeneity of the beta-trace proteins (lipocalin-type prostaglandin D synthase) in the cerebrospinal fluid of patients with neurological disorders analyzed by capillary isoelectrofocusing.</title>
        <authorList>
            <person name="Hiraoka A."/>
            <person name="Seiki K."/>
            <person name="Oda H."/>
            <person name="Eguchi N."/>
            <person name="Urade Y."/>
            <person name="Tominaga I."/>
            <person name="Baba K."/>
        </authorList>
    </citation>
    <scope>USE AS A MARKER FOR NEUROLOGICAL DISORDERS</scope>
</reference>
<reference key="28">
    <citation type="journal article" date="2001" name="Nephron">
        <title>Urinary prostaglandin D synthase (beta-trace) excretion increases in the early stage of diabetes mellitus.</title>
        <authorList>
            <person name="Hirawa N."/>
            <person name="Uehara Y."/>
            <person name="Ikeda T."/>
            <person name="Gomi T."/>
            <person name="Hamano K."/>
            <person name="Totsuka Y."/>
            <person name="Yamakado M."/>
            <person name="Takagi M."/>
            <person name="Eguchi N."/>
            <person name="Oda H."/>
            <person name="Seiki K."/>
            <person name="Nakajima H."/>
            <person name="Urade Y."/>
        </authorList>
    </citation>
    <scope>USE AS A MARKER FOR RENAL INJURY IN DIABETES MELLITUS</scope>
</reference>
<reference key="29">
    <citation type="journal article" date="2005" name="J. Proteome Res.">
        <title>Human plasma N-glycoproteome analysis by immunoaffinity subtraction, hydrazide chemistry, and mass spectrometry.</title>
        <authorList>
            <person name="Liu T."/>
            <person name="Qian W.-J."/>
            <person name="Gritsenko M.A."/>
            <person name="Camp D.G. II"/>
            <person name="Monroe M.E."/>
            <person name="Moore R.J."/>
            <person name="Smith R.D."/>
        </authorList>
    </citation>
    <scope>GLYCOSYLATION [LARGE SCALE ANALYSIS] AT ASN-78</scope>
    <source>
        <tissue>Plasma</tissue>
    </source>
</reference>
<reference key="30">
    <citation type="journal article" date="2009" name="J. Proteome Res.">
        <title>Glycoproteomics analysis of human liver tissue by combination of multiple enzyme digestion and hydrazide chemistry.</title>
        <authorList>
            <person name="Chen R."/>
            <person name="Jiang X."/>
            <person name="Sun D."/>
            <person name="Han G."/>
            <person name="Wang F."/>
            <person name="Ye M."/>
            <person name="Wang L."/>
            <person name="Zou H."/>
        </authorList>
    </citation>
    <scope>GLYCOSYLATION [LARGE SCALE ANALYSIS] AT ASN-51</scope>
    <source>
        <tissue>Liver</tissue>
    </source>
</reference>
<reference key="31">
    <citation type="journal article" date="2009" name="Mol. Cell. Proteomics">
        <title>A strategy for precise and large scale identification of core fucosylated glycoproteins.</title>
        <authorList>
            <person name="Jia W."/>
            <person name="Lu Z."/>
            <person name="Fu Y."/>
            <person name="Wang H.P."/>
            <person name="Wang L.H."/>
            <person name="Chi H."/>
            <person name="Yuan Z.F."/>
            <person name="Zheng Z.B."/>
            <person name="Song L.N."/>
            <person name="Han H.H."/>
            <person name="Liang Y.M."/>
            <person name="Wang J.L."/>
            <person name="Cai Y."/>
            <person name="Zhang Y.K."/>
            <person name="Deng Y.L."/>
            <person name="Ying W.T."/>
            <person name="He S.M."/>
            <person name="Qian X.H."/>
        </authorList>
    </citation>
    <scope>GLYCOSYLATION AT ASN-78</scope>
</reference>
<reference key="32">
    <citation type="journal article" date="2009" name="Nat. Methods">
        <title>Enrichment of glycopeptides for glycan structure and attachment site identification.</title>
        <authorList>
            <person name="Nilsson J."/>
            <person name="Rueetschi U."/>
            <person name="Halim A."/>
            <person name="Hesse C."/>
            <person name="Carlsohn E."/>
            <person name="Brinkmalm G."/>
            <person name="Larson G."/>
        </authorList>
    </citation>
    <scope>GLYCOSYLATION [LARGE SCALE ANALYSIS] AT ASN-51 AND ASN-78</scope>
    <scope>STRUCTURE OF CARBOHYDRATES</scope>
    <source>
        <tissue>Cerebrospinal fluid</tissue>
    </source>
</reference>
<reference key="33">
    <citation type="journal article" date="2012" name="Mol. Cell. Proteomics">
        <title>Human urinary glycoproteomics; attachment site specific analysis of N- and O-linked glycosylations by CID and ECD.</title>
        <authorList>
            <person name="Halim A."/>
            <person name="Nilsson J."/>
            <person name="Ruetschi U."/>
            <person name="Hesse C."/>
            <person name="Larson G."/>
        </authorList>
    </citation>
    <scope>GLYCOSYLATION AT ASN-78</scope>
    <scope>STRUCTURE OF CARBOHYDRATES</scope>
    <scope>IDENTIFICATION BY MASS SPECTROMETRY</scope>
</reference>
<reference key="34">
    <citation type="journal article" date="2013" name="J. Proteome Res.">
        <title>LC-MS/MS characterization of O-glycosylation sites and glycan structures of human cerebrospinal fluid glycoproteins.</title>
        <authorList>
            <person name="Halim A."/>
            <person name="Ruetschi U."/>
            <person name="Larson G."/>
            <person name="Nilsson J."/>
        </authorList>
    </citation>
    <scope>GLYCOSYLATION AT SER-29</scope>
    <scope>IDENTIFICATION BY MASS SPECTROMETRY</scope>
</reference>
<reference key="35">
    <citation type="journal article" date="2010" name="FASEB J.">
        <title>Structure-function analysis of human l-prostaglandin D synthase bound with fatty acid molecules.</title>
        <authorList>
            <person name="Zhou Y."/>
            <person name="Shaw N."/>
            <person name="Li Y."/>
            <person name="Zhao Y."/>
            <person name="Zhang R."/>
            <person name="Liu Z.J."/>
        </authorList>
    </citation>
    <scope>X-RAY CRYSTALLOGRAPHY (1.4 ANGSTROMS) OF 29-190 OF MUTANT ALA-65 IN COMPLEXES WITH FATTY ACIDS</scope>
    <scope>FUNCTION</scope>
    <scope>CATALYTIC ACTIVITY</scope>
    <scope>SUBUNIT</scope>
    <scope>MUTAGENESIS OF LYS-59; MET-64; CYS-65; LEU-79; PHE-83; LEU-131 AND TYR-149</scope>
    <scope>DOMAIN</scope>
</reference>
<reference key="36">
    <citation type="submission" date="2010-01" db="PDB data bank">
        <title>Crystal structure of the human lipocalin-type prostaglandin D synthase crystallised with the substrate analog 9,11-dideoxy-9alpha,11alpha- epoxymethanoprostaglandin f2alpha.</title>
        <authorList>
            <consortium name="Structural genomics consortium (SGC)"/>
        </authorList>
    </citation>
    <scope>X-RAY CRYSTALLOGRAPHY (2.0 ANGSTROMS) OF 23-190 IN COMPLEX WITH SUBSTRATE ANALOG</scope>
</reference>
<accession>P41222</accession>
<accession>B2R727</accession>
<accession>Q5SQ10</accession>
<accession>Q7M4P3</accession>
<accession>Q9UC22</accession>
<accession>Q9UCC9</accession>
<accession>Q9UCD9</accession>
<dbReference type="EC" id="5.3.99.2" evidence="9"/>
<dbReference type="EMBL" id="M61900">
    <property type="protein sequence ID" value="AAA36494.2"/>
    <property type="molecule type" value="mRNA"/>
</dbReference>
<dbReference type="EMBL" id="M98538">
    <property type="protein sequence ID" value="AAB51074.1"/>
    <property type="molecule type" value="Genomic_DNA"/>
</dbReference>
<dbReference type="EMBL" id="M98537">
    <property type="protein sequence ID" value="AAB51074.1"/>
    <property type="status" value="JOINED"/>
    <property type="molecule type" value="Genomic_DNA"/>
</dbReference>
<dbReference type="EMBL" id="AY026356">
    <property type="protein sequence ID" value="AAK07679.1"/>
    <property type="molecule type" value="mRNA"/>
</dbReference>
<dbReference type="EMBL" id="DQ297141">
    <property type="protein sequence ID" value="ABB84464.1"/>
    <property type="molecule type" value="Genomic_DNA"/>
</dbReference>
<dbReference type="EMBL" id="AK312817">
    <property type="protein sequence ID" value="BAG35674.1"/>
    <property type="molecule type" value="mRNA"/>
</dbReference>
<dbReference type="EMBL" id="AK075333">
    <property type="protein sequence ID" value="BAG52113.1"/>
    <property type="molecule type" value="mRNA"/>
</dbReference>
<dbReference type="EMBL" id="AL807752">
    <property type="status" value="NOT_ANNOTATED_CDS"/>
    <property type="molecule type" value="Genomic_DNA"/>
</dbReference>
<dbReference type="EMBL" id="CH471090">
    <property type="protein sequence ID" value="EAW88321.1"/>
    <property type="molecule type" value="Genomic_DNA"/>
</dbReference>
<dbReference type="EMBL" id="BC005939">
    <property type="protein sequence ID" value="AAH05939.1"/>
    <property type="molecule type" value="mRNA"/>
</dbReference>
<dbReference type="EMBL" id="BT019921">
    <property type="protein sequence ID" value="AAV38724.1"/>
    <property type="molecule type" value="mRNA"/>
</dbReference>
<dbReference type="EMBL" id="BT019922">
    <property type="protein sequence ID" value="AAV38725.1"/>
    <property type="molecule type" value="mRNA"/>
</dbReference>
<dbReference type="CCDS" id="CCDS7019.1"/>
<dbReference type="PIR" id="A44455">
    <property type="entry name" value="A44455"/>
</dbReference>
<dbReference type="PIR" id="PH1567">
    <property type="entry name" value="PH1567"/>
</dbReference>
<dbReference type="RefSeq" id="NP_000945.3">
    <property type="nucleotide sequence ID" value="NM_000954.5"/>
</dbReference>
<dbReference type="PDB" id="2WWP">
    <property type="method" value="X-ray"/>
    <property type="resolution" value="2.00 A"/>
    <property type="chains" value="A/B=23-190"/>
</dbReference>
<dbReference type="PDB" id="3O19">
    <property type="method" value="X-ray"/>
    <property type="resolution" value="1.66 A"/>
    <property type="chains" value="A=29-190"/>
</dbReference>
<dbReference type="PDB" id="3O22">
    <property type="method" value="X-ray"/>
    <property type="resolution" value="1.40 A"/>
    <property type="chains" value="A=29-190"/>
</dbReference>
<dbReference type="PDB" id="3O2Y">
    <property type="method" value="X-ray"/>
    <property type="resolution" value="1.70 A"/>
    <property type="chains" value="A/B=29-190"/>
</dbReference>
<dbReference type="PDB" id="4IMN">
    <property type="method" value="X-ray"/>
    <property type="resolution" value="2.09 A"/>
    <property type="chains" value="A=23-190"/>
</dbReference>
<dbReference type="PDB" id="4IMO">
    <property type="method" value="X-ray"/>
    <property type="resolution" value="1.88 A"/>
    <property type="chains" value="A=23-190"/>
</dbReference>
<dbReference type="PDB" id="4ORR">
    <property type="method" value="X-ray"/>
    <property type="resolution" value="1.40 A"/>
    <property type="chains" value="A=1-190"/>
</dbReference>
<dbReference type="PDB" id="4ORS">
    <property type="method" value="X-ray"/>
    <property type="resolution" value="1.40 A"/>
    <property type="chains" value="A/B=1-190"/>
</dbReference>
<dbReference type="PDB" id="4ORU">
    <property type="method" value="X-ray"/>
    <property type="resolution" value="1.55 A"/>
    <property type="chains" value="A/B=1-190"/>
</dbReference>
<dbReference type="PDB" id="4ORW">
    <property type="method" value="X-ray"/>
    <property type="resolution" value="1.66 A"/>
    <property type="chains" value="A/B=1-190"/>
</dbReference>
<dbReference type="PDB" id="4ORX">
    <property type="method" value="X-ray"/>
    <property type="resolution" value="1.60 A"/>
    <property type="chains" value="A/B=1-190"/>
</dbReference>
<dbReference type="PDB" id="4ORY">
    <property type="method" value="X-ray"/>
    <property type="resolution" value="1.80 A"/>
    <property type="chains" value="A/B/C/D/E/F/G/H=1-190"/>
</dbReference>
<dbReference type="PDB" id="4OS0">
    <property type="method" value="X-ray"/>
    <property type="resolution" value="1.75 A"/>
    <property type="chains" value="A/B=1-190"/>
</dbReference>
<dbReference type="PDB" id="4OS3">
    <property type="method" value="X-ray"/>
    <property type="resolution" value="1.40 A"/>
    <property type="chains" value="A/B=1-190"/>
</dbReference>
<dbReference type="PDB" id="4OS8">
    <property type="method" value="X-ray"/>
    <property type="resolution" value="1.69 A"/>
    <property type="chains" value="A/B=1-190"/>
</dbReference>
<dbReference type="PDB" id="5WY9">
    <property type="method" value="X-ray"/>
    <property type="resolution" value="1.45 A"/>
    <property type="chains" value="A=23-190"/>
</dbReference>
<dbReference type="PDB" id="8HTA">
    <property type="method" value="NMR"/>
    <property type="chains" value="A=23-190"/>
</dbReference>
<dbReference type="PDBsum" id="2WWP"/>
<dbReference type="PDBsum" id="3O19"/>
<dbReference type="PDBsum" id="3O22"/>
<dbReference type="PDBsum" id="3O2Y"/>
<dbReference type="PDBsum" id="4IMN"/>
<dbReference type="PDBsum" id="4IMO"/>
<dbReference type="PDBsum" id="4ORR"/>
<dbReference type="PDBsum" id="4ORS"/>
<dbReference type="PDBsum" id="4ORU"/>
<dbReference type="PDBsum" id="4ORW"/>
<dbReference type="PDBsum" id="4ORX"/>
<dbReference type="PDBsum" id="4ORY"/>
<dbReference type="PDBsum" id="4OS0"/>
<dbReference type="PDBsum" id="4OS3"/>
<dbReference type="PDBsum" id="4OS8"/>
<dbReference type="PDBsum" id="5WY9"/>
<dbReference type="PDBsum" id="8HTA"/>
<dbReference type="SMR" id="P41222"/>
<dbReference type="BioGRID" id="111702">
    <property type="interactions" value="33"/>
</dbReference>
<dbReference type="CORUM" id="P41222"/>
<dbReference type="FunCoup" id="P41222">
    <property type="interactions" value="193"/>
</dbReference>
<dbReference type="IntAct" id="P41222">
    <property type="interactions" value="32"/>
</dbReference>
<dbReference type="MINT" id="P41222"/>
<dbReference type="STRING" id="9606.ENSP00000360687"/>
<dbReference type="BindingDB" id="P41222"/>
<dbReference type="ChEMBL" id="CHEMBL3430865"/>
<dbReference type="DrugBank" id="DB00162">
    <property type="generic name" value="Vitamin A"/>
</dbReference>
<dbReference type="DrugCentral" id="P41222"/>
<dbReference type="GuidetoPHARMACOLOGY" id="1380"/>
<dbReference type="SwissLipids" id="SLP:000000141"/>
<dbReference type="TCDB" id="1.C.3.5.1">
    <property type="family name" value="the Alpha-hemolysin channel-forming toxin (Alphahl) family"/>
</dbReference>
<dbReference type="GlyConnect" id="685">
    <property type="glycosylation" value="149 N-Linked glycans (3 sites), 19 O-Linked glycans (5 sites)"/>
</dbReference>
<dbReference type="GlyCosmos" id="P41222">
    <property type="glycosylation" value="7 sites, 163 glycans"/>
</dbReference>
<dbReference type="GlyGen" id="P41222">
    <property type="glycosylation" value="11 sites, 215 N-linked glycans (3 sites), 11 O-linked glycans (6 sites)"/>
</dbReference>
<dbReference type="iPTMnet" id="P41222"/>
<dbReference type="PhosphoSitePlus" id="P41222"/>
<dbReference type="BioMuta" id="PTGDS"/>
<dbReference type="DMDM" id="730305"/>
<dbReference type="CPTAC" id="CPTAC-686"/>
<dbReference type="jPOST" id="P41222"/>
<dbReference type="MassIVE" id="P41222"/>
<dbReference type="PaxDb" id="9606-ENSP00000360687"/>
<dbReference type="PeptideAtlas" id="P41222"/>
<dbReference type="ProteomicsDB" id="55431"/>
<dbReference type="ABCD" id="P41222">
    <property type="antibodies" value="1 sequenced antibody"/>
</dbReference>
<dbReference type="Antibodypedia" id="1507">
    <property type="antibodies" value="363 antibodies from 31 providers"/>
</dbReference>
<dbReference type="DNASU" id="5730"/>
<dbReference type="Ensembl" id="ENST00000371625.8">
    <property type="protein sequence ID" value="ENSP00000360687.3"/>
    <property type="gene ID" value="ENSG00000107317.13"/>
</dbReference>
<dbReference type="GeneID" id="5730"/>
<dbReference type="KEGG" id="hsa:5730"/>
<dbReference type="MANE-Select" id="ENST00000371625.8">
    <property type="protein sequence ID" value="ENSP00000360687.3"/>
    <property type="RefSeq nucleotide sequence ID" value="NM_000954.6"/>
    <property type="RefSeq protein sequence ID" value="NP_000945.3"/>
</dbReference>
<dbReference type="UCSC" id="uc004cke.4">
    <property type="organism name" value="human"/>
</dbReference>
<dbReference type="AGR" id="HGNC:9592"/>
<dbReference type="CTD" id="5730"/>
<dbReference type="DisGeNET" id="5730"/>
<dbReference type="GeneCards" id="PTGDS"/>
<dbReference type="HGNC" id="HGNC:9592">
    <property type="gene designation" value="PTGDS"/>
</dbReference>
<dbReference type="HPA" id="ENSG00000107317">
    <property type="expression patterns" value="Tissue enhanced (brain, heart muscle, testis)"/>
</dbReference>
<dbReference type="MIM" id="176803">
    <property type="type" value="gene"/>
</dbReference>
<dbReference type="neXtProt" id="NX_P41222"/>
<dbReference type="OpenTargets" id="ENSG00000107317"/>
<dbReference type="PharmGKB" id="PA33945"/>
<dbReference type="VEuPathDB" id="HostDB:ENSG00000107317"/>
<dbReference type="eggNOG" id="ENOG502S6GK">
    <property type="taxonomic scope" value="Eukaryota"/>
</dbReference>
<dbReference type="GeneTree" id="ENSGT01050000244868"/>
<dbReference type="HOGENOM" id="CLU_094061_1_1_1"/>
<dbReference type="InParanoid" id="P41222"/>
<dbReference type="OMA" id="QIWNNDN"/>
<dbReference type="OrthoDB" id="9048943at2759"/>
<dbReference type="PAN-GO" id="P41222">
    <property type="GO annotations" value="1 GO annotation based on evolutionary models"/>
</dbReference>
<dbReference type="PhylomeDB" id="P41222"/>
<dbReference type="TreeFam" id="TF336103"/>
<dbReference type="BioCyc" id="MetaCyc:HS02989-MONOMER"/>
<dbReference type="BRENDA" id="5.3.99.2">
    <property type="organism ID" value="2681"/>
</dbReference>
<dbReference type="PathwayCommons" id="P41222"/>
<dbReference type="Reactome" id="R-HSA-2162123">
    <property type="pathway name" value="Synthesis of Prostaglandins (PG) and Thromboxanes (TX)"/>
</dbReference>
<dbReference type="Reactome" id="R-HSA-9690406">
    <property type="pathway name" value="Transcriptional regulation of testis differentiation"/>
</dbReference>
<dbReference type="SABIO-RK" id="P41222"/>
<dbReference type="SignaLink" id="P41222"/>
<dbReference type="SIGNOR" id="P41222"/>
<dbReference type="BioGRID-ORCS" id="5730">
    <property type="hits" value="8 hits in 1153 CRISPR screens"/>
</dbReference>
<dbReference type="ChiTaRS" id="PTGDS">
    <property type="organism name" value="human"/>
</dbReference>
<dbReference type="EvolutionaryTrace" id="P41222"/>
<dbReference type="GeneWiki" id="Prostaglandin_D2_synthase"/>
<dbReference type="GenomeRNAi" id="5730"/>
<dbReference type="Pharos" id="P41222">
    <property type="development level" value="Tchem"/>
</dbReference>
<dbReference type="PRO" id="PR:P41222"/>
<dbReference type="Proteomes" id="UP000005640">
    <property type="component" value="Chromosome 9"/>
</dbReference>
<dbReference type="RNAct" id="P41222">
    <property type="molecule type" value="protein"/>
</dbReference>
<dbReference type="Bgee" id="ENSG00000107317">
    <property type="expression patterns" value="Expressed in left testis and 95 other cell types or tissues"/>
</dbReference>
<dbReference type="ExpressionAtlas" id="P41222">
    <property type="expression patterns" value="baseline and differential"/>
</dbReference>
<dbReference type="GO" id="GO:0005789">
    <property type="term" value="C:endoplasmic reticulum membrane"/>
    <property type="evidence" value="ECO:0000304"/>
    <property type="project" value="Reactome"/>
</dbReference>
<dbReference type="GO" id="GO:0070062">
    <property type="term" value="C:extracellular exosome"/>
    <property type="evidence" value="ECO:0007005"/>
    <property type="project" value="UniProtKB"/>
</dbReference>
<dbReference type="GO" id="GO:0005576">
    <property type="term" value="C:extracellular region"/>
    <property type="evidence" value="ECO:0000314"/>
    <property type="project" value="UniProtKB"/>
</dbReference>
<dbReference type="GO" id="GO:0005615">
    <property type="term" value="C:extracellular space"/>
    <property type="evidence" value="ECO:0000314"/>
    <property type="project" value="UniProtKB"/>
</dbReference>
<dbReference type="GO" id="GO:0005794">
    <property type="term" value="C:Golgi apparatus"/>
    <property type="evidence" value="ECO:0000250"/>
    <property type="project" value="UniProtKB"/>
</dbReference>
<dbReference type="GO" id="GO:0031965">
    <property type="term" value="C:nuclear membrane"/>
    <property type="evidence" value="ECO:0007669"/>
    <property type="project" value="UniProtKB-SubCell"/>
</dbReference>
<dbReference type="GO" id="GO:0048471">
    <property type="term" value="C:perinuclear region of cytoplasm"/>
    <property type="evidence" value="ECO:0007669"/>
    <property type="project" value="UniProtKB-SubCell"/>
</dbReference>
<dbReference type="GO" id="GO:0005791">
    <property type="term" value="C:rough endoplasmic reticulum"/>
    <property type="evidence" value="ECO:0000314"/>
    <property type="project" value="UniProtKB"/>
</dbReference>
<dbReference type="GO" id="GO:0005504">
    <property type="term" value="F:fatty acid binding"/>
    <property type="evidence" value="ECO:0000314"/>
    <property type="project" value="UniProtKB"/>
</dbReference>
<dbReference type="GO" id="GO:0004667">
    <property type="term" value="F:prostaglandin-D synthase activity"/>
    <property type="evidence" value="ECO:0000314"/>
    <property type="project" value="UniProtKB"/>
</dbReference>
<dbReference type="GO" id="GO:0005501">
    <property type="term" value="F:retinoid binding"/>
    <property type="evidence" value="ECO:0000250"/>
    <property type="project" value="UniProtKB"/>
</dbReference>
<dbReference type="GO" id="GO:0010467">
    <property type="term" value="P:gene expression"/>
    <property type="evidence" value="ECO:0007669"/>
    <property type="project" value="Ensembl"/>
</dbReference>
<dbReference type="GO" id="GO:0043303">
    <property type="term" value="P:mast cell degranulation"/>
    <property type="evidence" value="ECO:0007669"/>
    <property type="project" value="UniProtKB-KW"/>
</dbReference>
<dbReference type="GO" id="GO:2000255">
    <property type="term" value="P:negative regulation of male germ cell proliferation"/>
    <property type="evidence" value="ECO:0007669"/>
    <property type="project" value="Ensembl"/>
</dbReference>
<dbReference type="GO" id="GO:0001516">
    <property type="term" value="P:prostaglandin biosynthetic process"/>
    <property type="evidence" value="ECO:0000314"/>
    <property type="project" value="UniProtKB"/>
</dbReference>
<dbReference type="GO" id="GO:0046457">
    <property type="term" value="P:prostanoid biosynthetic process"/>
    <property type="evidence" value="ECO:0000304"/>
    <property type="project" value="Reactome"/>
</dbReference>
<dbReference type="GO" id="GO:0045187">
    <property type="term" value="P:regulation of circadian sleep/wake cycle, sleep"/>
    <property type="evidence" value="ECO:0000250"/>
    <property type="project" value="UniProtKB"/>
</dbReference>
<dbReference type="GO" id="GO:0051384">
    <property type="term" value="P:response to glucocorticoid"/>
    <property type="evidence" value="ECO:0007669"/>
    <property type="project" value="Ensembl"/>
</dbReference>
<dbReference type="CDD" id="cd19419">
    <property type="entry name" value="lipocalin_L-PGDS"/>
    <property type="match status" value="1"/>
</dbReference>
<dbReference type="FunFam" id="2.40.128.20:FF:000010">
    <property type="entry name" value="Prostaglandin-H2 D-isomerase"/>
    <property type="match status" value="1"/>
</dbReference>
<dbReference type="Gene3D" id="2.40.128.20">
    <property type="match status" value="1"/>
</dbReference>
<dbReference type="InterPro" id="IPR012674">
    <property type="entry name" value="Calycin"/>
</dbReference>
<dbReference type="InterPro" id="IPR002345">
    <property type="entry name" value="Lipocalin"/>
</dbReference>
<dbReference type="InterPro" id="IPR022272">
    <property type="entry name" value="Lipocalin_CS"/>
</dbReference>
<dbReference type="InterPro" id="IPR000566">
    <property type="entry name" value="Lipocln_cytosolic_FA-bd_dom"/>
</dbReference>
<dbReference type="PANTHER" id="PTHR11430">
    <property type="entry name" value="LIPOCALIN"/>
    <property type="match status" value="1"/>
</dbReference>
<dbReference type="PANTHER" id="PTHR11430:SF86">
    <property type="entry name" value="PROSTAGLANDIN-H2 D-ISOMERASE"/>
    <property type="match status" value="1"/>
</dbReference>
<dbReference type="Pfam" id="PF00061">
    <property type="entry name" value="Lipocalin"/>
    <property type="match status" value="1"/>
</dbReference>
<dbReference type="PRINTS" id="PR00179">
    <property type="entry name" value="LIPOCALIN"/>
</dbReference>
<dbReference type="PRINTS" id="PR01254">
    <property type="entry name" value="PGNDSYNTHASE"/>
</dbReference>
<dbReference type="SUPFAM" id="SSF50814">
    <property type="entry name" value="Lipocalins"/>
    <property type="match status" value="1"/>
</dbReference>
<dbReference type="PROSITE" id="PS00213">
    <property type="entry name" value="LIPOCALIN"/>
    <property type="match status" value="1"/>
</dbReference>
<feature type="signal peptide" evidence="5 12 13 14 15 22 23">
    <location>
        <begin position="1"/>
        <end position="22"/>
    </location>
</feature>
<feature type="chain" id="PRO_0000017945" description="Prostaglandin-H2 D-isomerase">
    <location>
        <begin position="23"/>
        <end position="190"/>
    </location>
</feature>
<feature type="active site" description="Nucleophile" evidence="9">
    <location>
        <position position="65"/>
    </location>
</feature>
<feature type="glycosylation site" description="O-linked (GalNAc...) serine" evidence="11">
    <location>
        <position position="29"/>
    </location>
</feature>
<feature type="glycosylation site" description="N-linked (GlcNAc...) (complex) asparagine" evidence="7 8 14">
    <location>
        <position position="51"/>
    </location>
</feature>
<feature type="glycosylation site" description="N-linked (GlcNAc...) (complex) asparagine" evidence="4 6 8 10 14">
    <location>
        <position position="78"/>
    </location>
</feature>
<feature type="disulfide bond" evidence="1">
    <location>
        <begin position="89"/>
        <end position="186"/>
    </location>
</feature>
<feature type="sequence variant" id="VAR_004273" description="In dbSNP:rs11552179.">
    <original>R</original>
    <variation>Q</variation>
    <location>
        <position position="56"/>
    </location>
</feature>
<feature type="mutagenesis site" description="Increases enzyme activity about two-fold." evidence="9">
    <original>K</original>
    <variation>A</variation>
    <location>
        <position position="59"/>
    </location>
</feature>
<feature type="mutagenesis site" description="Reduces enzyme activity almost ten-fold." evidence="9">
    <original>M</original>
    <variation>A</variation>
    <location>
        <position position="64"/>
    </location>
</feature>
<feature type="mutagenesis site" description="Loss of enzyme activity." evidence="9">
    <original>C</original>
    <variation>A</variation>
    <location>
        <position position="65"/>
    </location>
</feature>
<feature type="mutagenesis site" description="Reduces enzyme activity over ten-fold." evidence="9">
    <original>L</original>
    <variation>A</variation>
    <location>
        <position position="79"/>
    </location>
</feature>
<feature type="mutagenesis site" description="Reduces enzyme activity about five-fold." evidence="9">
    <original>F</original>
    <variation>A</variation>
    <location>
        <position position="83"/>
    </location>
</feature>
<feature type="mutagenesis site" description="Reduces enzyme activity almost ten-fold." evidence="9">
    <original>L</original>
    <variation>A</variation>
    <location>
        <position position="131"/>
    </location>
</feature>
<feature type="mutagenesis site" description="Increases enzyme activity about two-fold." evidence="9">
    <original>Y</original>
    <variation>A</variation>
    <location>
        <position position="149"/>
    </location>
</feature>
<feature type="sequence conflict" description="In Ref. 18; AA sequence." evidence="26" ref="18">
    <original>E</original>
    <variation>P</variation>
    <location>
        <position position="25"/>
    </location>
</feature>
<feature type="sequence conflict" description="In Ref. 17; AA sequence." evidence="26" ref="17">
    <original>N</original>
    <variation>L</variation>
    <location>
        <position position="33"/>
    </location>
</feature>
<feature type="helix" evidence="27">
    <location>
        <begin position="36"/>
        <end position="39"/>
    </location>
</feature>
<feature type="strand" evidence="27">
    <location>
        <begin position="41"/>
        <end position="51"/>
    </location>
</feature>
<feature type="helix" evidence="27">
    <location>
        <begin position="53"/>
        <end position="60"/>
    </location>
</feature>
<feature type="strand" evidence="27">
    <location>
        <begin position="62"/>
        <end position="71"/>
    </location>
</feature>
<feature type="strand" evidence="27">
    <location>
        <begin position="75"/>
        <end position="85"/>
    </location>
</feature>
<feature type="strand" evidence="27">
    <location>
        <begin position="88"/>
        <end position="98"/>
    </location>
</feature>
<feature type="strand" evidence="27">
    <location>
        <begin position="104"/>
        <end position="108"/>
    </location>
</feature>
<feature type="turn" evidence="28">
    <location>
        <begin position="110"/>
        <end position="112"/>
    </location>
</feature>
<feature type="strand" evidence="27">
    <location>
        <begin position="115"/>
        <end position="123"/>
    </location>
</feature>
<feature type="strand" evidence="27">
    <location>
        <begin position="125"/>
        <end position="138"/>
    </location>
</feature>
<feature type="helix" evidence="27">
    <location>
        <begin position="139"/>
        <end position="142"/>
    </location>
</feature>
<feature type="strand" evidence="27">
    <location>
        <begin position="144"/>
        <end position="154"/>
    </location>
</feature>
<feature type="helix" evidence="27">
    <location>
        <begin position="157"/>
        <end position="169"/>
    </location>
</feature>
<feature type="helix" evidence="27">
    <location>
        <begin position="174"/>
        <end position="176"/>
    </location>
</feature>
<feature type="strand" evidence="27">
    <location>
        <begin position="177"/>
        <end position="179"/>
    </location>
</feature>
<feature type="strand" evidence="27">
    <location>
        <begin position="184"/>
        <end position="186"/>
    </location>
</feature>
<proteinExistence type="evidence at protein level"/>
<name>PTGDS_HUMAN</name>
<evidence type="ECO:0000250" key="1">
    <source>
        <dbReference type="UniProtKB" id="O09114"/>
    </source>
</evidence>
<evidence type="ECO:0000269" key="2">
    <source>
    </source>
</evidence>
<evidence type="ECO:0000269" key="3">
    <source>
    </source>
</evidence>
<evidence type="ECO:0000269" key="4">
    <source>
    </source>
</evidence>
<evidence type="ECO:0000269" key="5">
    <source>
    </source>
</evidence>
<evidence type="ECO:0000269" key="6">
    <source>
    </source>
</evidence>
<evidence type="ECO:0000269" key="7">
    <source>
    </source>
</evidence>
<evidence type="ECO:0000269" key="8">
    <source>
    </source>
</evidence>
<evidence type="ECO:0000269" key="9">
    <source>
    </source>
</evidence>
<evidence type="ECO:0000269" key="10">
    <source>
    </source>
</evidence>
<evidence type="ECO:0000269" key="11">
    <source>
    </source>
</evidence>
<evidence type="ECO:0000269" key="12">
    <source>
    </source>
</evidence>
<evidence type="ECO:0000269" key="13">
    <source>
    </source>
</evidence>
<evidence type="ECO:0000269" key="14">
    <source>
    </source>
</evidence>
<evidence type="ECO:0000269" key="15">
    <source>
    </source>
</evidence>
<evidence type="ECO:0000269" key="16">
    <source>
    </source>
</evidence>
<evidence type="ECO:0000269" key="17">
    <source>
    </source>
</evidence>
<evidence type="ECO:0000269" key="18">
    <source>
    </source>
</evidence>
<evidence type="ECO:0000269" key="19">
    <source>
    </source>
</evidence>
<evidence type="ECO:0000269" key="20">
    <source>
    </source>
</evidence>
<evidence type="ECO:0000269" key="21">
    <source>
    </source>
</evidence>
<evidence type="ECO:0000269" key="22">
    <source>
    </source>
</evidence>
<evidence type="ECO:0000269" key="23">
    <source>
    </source>
</evidence>
<evidence type="ECO:0000269" key="24">
    <source ref="36"/>
</evidence>
<evidence type="ECO:0000303" key="25">
    <source>
    </source>
</evidence>
<evidence type="ECO:0000305" key="26"/>
<evidence type="ECO:0007829" key="27">
    <source>
        <dbReference type="PDB" id="3O22"/>
    </source>
</evidence>
<evidence type="ECO:0007829" key="28">
    <source>
        <dbReference type="PDB" id="4ORR"/>
    </source>
</evidence>
<gene>
    <name type="primary">PTGDS</name>
    <name type="synonym">PDS</name>
</gene>
<protein>
    <recommendedName>
        <fullName>Prostaglandin-H2 D-isomerase</fullName>
        <ecNumber evidence="9">5.3.99.2</ecNumber>
    </recommendedName>
    <alternativeName>
        <fullName>Beta-trace protein</fullName>
    </alternativeName>
    <alternativeName>
        <fullName>Cerebrin-28</fullName>
    </alternativeName>
    <alternativeName>
        <fullName>Glutathione-independent PGD synthase</fullName>
    </alternativeName>
    <alternativeName>
        <fullName>Lipocalin-type prostaglandin-D synthase</fullName>
        <shortName evidence="25">L-PGDS</shortName>
    </alternativeName>
    <alternativeName>
        <fullName>Prostaglandin-D2 synthase</fullName>
        <shortName>PGD2 synthase</shortName>
        <shortName>PGDS</shortName>
        <shortName>PGDS2</shortName>
    </alternativeName>
</protein>
<sequence>MATHHTLWMGLALLGVLGDLQAAPEAQVSVQPNFQQDKFLGRWFSAGLASNSSWLREKKAALSMCKSVVAPATDGGLNLTSTFLRKNQCETRTMLLQPAGSLGSYSYRSPHWGSTYSVSVVETDYDQYALLYSQGSKGPGEDFRMATLYSRTQTPRAELKEKFTAFCKAQGFTEDTIVFLPQTDKCMTEQ</sequence>
<comment type="function">
    <text evidence="1 9 22">Catalyzes the conversion of PGH2 to PGD2, a prostaglandin involved in smooth muscle contraction/relaxation and a potent inhibitor of platelet aggregation (PubMed:20667974). Involved in a variety of CNS functions, such as sedation, NREM sleep and PGE2-induced allodynia, and may have an anti-apoptotic role in oligodendrocytes. Binds small non-substrate lipophilic molecules, including biliverdin, bilirubin, retinal, retinoic acid and thyroid hormone, and may act as a scavenger for harmful hydrophobic molecules and as a secretory retinoid and thyroid hormone transporter. Possibly involved in development and maintenance of the blood-brain, blood-retina, blood-aqueous humor and blood-testis barrier. It is likely to play important roles in both maturation and maintenance of the central nervous system and male reproductive system (PubMed:20667974, PubMed:9475419). Involved in PLA2G3-dependent maturation of mast cells. PLA2G3 is secreted by immature mast cells and acts on nearby fibroblasts upstream to PTDGS to synthesize PGD2, which in turn promotes mast cell maturation and degranulation via PTGDR (By similarity).</text>
</comment>
<comment type="catalytic activity">
    <reaction evidence="9">
        <text>prostaglandin H2 = prostaglandin D2</text>
        <dbReference type="Rhea" id="RHEA:10600"/>
        <dbReference type="ChEBI" id="CHEBI:57405"/>
        <dbReference type="ChEBI" id="CHEBI:57406"/>
        <dbReference type="EC" id="5.3.99.2"/>
    </reaction>
</comment>
<comment type="subunit">
    <text evidence="9 24">Monomer.</text>
</comment>
<comment type="interaction">
    <interactant intactId="EBI-948821">
        <id>P41222</id>
    </interactant>
    <interactant intactId="EBI-930964">
        <id>P54253</id>
        <label>ATXN1</label>
    </interactant>
    <organismsDiffer>false</organismsDiffer>
    <experiments>5</experiments>
</comment>
<comment type="interaction">
    <interactant intactId="EBI-948821">
        <id>P41222</id>
    </interactant>
    <interactant intactId="EBI-3866279">
        <id>Q9BWT7</id>
        <label>CARD10</label>
    </interactant>
    <organismsDiffer>false</organismsDiffer>
    <experiments>3</experiments>
</comment>
<comment type="interaction">
    <interactant intactId="EBI-948821">
        <id>P41222</id>
    </interactant>
    <interactant intactId="EBI-718729">
        <id>P55212</id>
        <label>CASP6</label>
    </interactant>
    <organismsDiffer>false</organismsDiffer>
    <experiments>3</experiments>
</comment>
<comment type="interaction">
    <interactant intactId="EBI-948821">
        <id>P41222</id>
    </interactant>
    <interactant intactId="EBI-3867333">
        <id>A8MQ03</id>
        <label>CYSRT1</label>
    </interactant>
    <organismsDiffer>false</organismsDiffer>
    <experiments>3</experiments>
</comment>
<comment type="interaction">
    <interactant intactId="EBI-948821">
        <id>P41222</id>
    </interactant>
    <interactant intactId="EBI-466029">
        <id>P42858</id>
        <label>HTT</label>
    </interactant>
    <organismsDiffer>false</organismsDiffer>
    <experiments>3</experiments>
</comment>
<comment type="interaction">
    <interactant intactId="EBI-948821">
        <id>P41222</id>
    </interactant>
    <interactant intactId="EBI-10172290">
        <id>P60409</id>
        <label>KRTAP10-7</label>
    </interactant>
    <organismsDiffer>false</organismsDiffer>
    <experiments>3</experiments>
</comment>
<comment type="interaction">
    <interactant intactId="EBI-948821">
        <id>P41222</id>
    </interactant>
    <interactant intactId="EBI-11953334">
        <id>P60328</id>
        <label>KRTAP12-3</label>
    </interactant>
    <organismsDiffer>false</organismsDiffer>
    <experiments>3</experiments>
</comment>
<comment type="interaction">
    <interactant intactId="EBI-948821">
        <id>P41222</id>
    </interactant>
    <interactant intactId="EBI-21591415">
        <id>P13473-2</id>
        <label>LAMP2</label>
    </interactant>
    <organismsDiffer>false</organismsDiffer>
    <experiments>3</experiments>
</comment>
<comment type="interaction">
    <interactant intactId="EBI-948821">
        <id>P41222</id>
    </interactant>
    <interactant intactId="EBI-2623095">
        <id>Q9Y371</id>
        <label>SH3GLB1</label>
    </interactant>
    <organismsDiffer>false</organismsDiffer>
    <experiments>3</experiments>
</comment>
<comment type="interaction">
    <interactant intactId="EBI-948821">
        <id>P41222</id>
    </interactant>
    <interactant intactId="EBI-947187">
        <id>Q9UHD9</id>
        <label>UBQLN2</label>
    </interactant>
    <organismsDiffer>false</organismsDiffer>
    <experiments>6</experiments>
</comment>
<comment type="subcellular location">
    <subcellularLocation>
        <location evidence="19">Rough endoplasmic reticulum</location>
    </subcellularLocation>
    <subcellularLocation>
        <location evidence="19">Nucleus membrane</location>
    </subcellularLocation>
    <subcellularLocation>
        <location evidence="19">Golgi apparatus</location>
    </subcellularLocation>
    <subcellularLocation>
        <location evidence="19">Cytoplasm</location>
        <location evidence="19">Perinuclear region</location>
    </subcellularLocation>
    <subcellularLocation>
        <location evidence="19">Secreted</location>
    </subcellularLocation>
    <text>Detected on rough endoplasmic reticulum of arachnoid and menigioma cells. Localized to the nuclear envelope, Golgi apparatus, secretory vesicles and spherical cytoplasmic structures in arachnoid trabecular cells, and to circular cytoplasmic structures in meningeal macrophages and perivascular microglial cells. In oligodendrocytes, localized to the rough endoplasmic reticulum and nuclear envelope. In retinal pigment epithelial cells, localized to distinct cytoplasmic domains including the perinuclear region. Also secreted.</text>
</comment>
<comment type="tissue specificity">
    <text evidence="2 3 13 16 18 19 21 22 23">Abundant in the brain and CNS, where it is expressed in tissues of the blood-brain barrier and secreted into the cerebro-spinal fluid. Abundantly expressed in the heart. In the male reproductive system, it is expressed in the testis, epididymis and prostate, and is secreted into the seminal fluid. Expressed in the eye and secreted into the aqueous humor. Lower levels detected in various tissue fluids such as serum, normal urine, ascitic fluid and tear fluid. Also found in a number of other organs including ovary, fimbriae of the fallopian tubes, kidney, leukocytes.</text>
</comment>
<comment type="developmental stage">
    <text evidence="17">Expression in the amniotic fluid increases dramatically during weeks 12 to 25 of pregnancy. Levels decrease slowly after 25 weeks.</text>
</comment>
<comment type="induction">
    <text evidence="20">By IL1B/interleukin-1 beta and thyroid hormone. Probably induced by dexamethasone, dihydrotestosterone (DHT), progesterone, retinoic acid and retinal. Repressed by the Notch-Hes signaling pathway.</text>
</comment>
<comment type="domain">
    <text evidence="9">Forms a beta-barrel structure that accommodates hydrophobic ligands in its interior.</text>
</comment>
<comment type="PTM">
    <text evidence="4 6 7 8 10 11 13 14">N- and O-glycosylated. Both N-glycosylation recognition sites are almost quantitatively occupied by N-glycans of the biantennary complex type, with a considerable proportion of structures bearing a bisecting GlcNAc. N-glycan at Asn-78: dHex1Hex5HexNAc4. Agalacto structure as well as sialylated and nonsialylated oligosaccharides bearing alpha2-3- and/or alpha2-6-linked NeuNAc are present.</text>
</comment>
<comment type="miscellaneous">
    <text>It has been proposed that the urinary and serum levels may provide a sensitive indicator of renal damage in diabetes mellitus and hypertension. Elevated levels in the coronary circulation may also be associated with angina. Changes in charge and molecular weight microheterogeneity, due to modification of the N-linked oligosaccharides, may be associated with neurodegenerative disease and multiple sclerosis. Detected in meningioma but not in other brain tumors and may be considered a specific cell marker for meningioma. Expression levels in amniotic fluid are altered in abnormal pregnancies. Levels are lower in pregnancies with trisomic fetuses and fetuses with renal abnormalities.</text>
</comment>
<comment type="similarity">
    <text evidence="26">Belongs to the calycin superfamily. Lipocalin family.</text>
</comment>
<keyword id="KW-0002">3D-structure</keyword>
<keyword id="KW-0963">Cytoplasm</keyword>
<keyword id="KW-0903">Direct protein sequencing</keyword>
<keyword id="KW-1015">Disulfide bond</keyword>
<keyword id="KW-0256">Endoplasmic reticulum</keyword>
<keyword id="KW-0275">Fatty acid biosynthesis</keyword>
<keyword id="KW-0276">Fatty acid metabolism</keyword>
<keyword id="KW-0325">Glycoprotein</keyword>
<keyword id="KW-0333">Golgi apparatus</keyword>
<keyword id="KW-0413">Isomerase</keyword>
<keyword id="KW-0444">Lipid biosynthesis</keyword>
<keyword id="KW-0443">Lipid metabolism</keyword>
<keyword id="KW-0467">Mast cell degranulation</keyword>
<keyword id="KW-0472">Membrane</keyword>
<keyword id="KW-0539">Nucleus</keyword>
<keyword id="KW-0643">Prostaglandin biosynthesis</keyword>
<keyword id="KW-0644">Prostaglandin metabolism</keyword>
<keyword id="KW-1267">Proteomics identification</keyword>
<keyword id="KW-1185">Reference proteome</keyword>
<keyword id="KW-0964">Secreted</keyword>
<keyword id="KW-0732">Signal</keyword>
<keyword id="KW-0813">Transport</keyword>